<feature type="chain" id="PRO_1000095390" description="Arginine--tRNA ligase">
    <location>
        <begin position="1"/>
        <end position="597"/>
    </location>
</feature>
<feature type="short sequence motif" description="'HIGH' region">
    <location>
        <begin position="125"/>
        <end position="135"/>
    </location>
</feature>
<accession>B2RHN9</accession>
<reference key="1">
    <citation type="journal article" date="2008" name="DNA Res.">
        <title>Determination of the genome sequence of Porphyromonas gingivalis strain ATCC 33277 and genomic comparison with strain W83 revealed extensive genome rearrangements in P. gingivalis.</title>
        <authorList>
            <person name="Naito M."/>
            <person name="Hirakawa H."/>
            <person name="Yamashita A."/>
            <person name="Ohara N."/>
            <person name="Shoji M."/>
            <person name="Yukitake H."/>
            <person name="Nakayama K."/>
            <person name="Toh H."/>
            <person name="Yoshimura F."/>
            <person name="Kuhara S."/>
            <person name="Hattori M."/>
            <person name="Hayashi T."/>
            <person name="Nakayama K."/>
        </authorList>
    </citation>
    <scope>NUCLEOTIDE SEQUENCE [LARGE SCALE GENOMIC DNA]</scope>
    <source>
        <strain>ATCC 33277 / DSM 20709 / CIP 103683 / JCM 12257 / NCTC 11834 / 2561</strain>
    </source>
</reference>
<organism>
    <name type="scientific">Porphyromonas gingivalis (strain ATCC 33277 / DSM 20709 / CIP 103683 / JCM 12257 / NCTC 11834 / 2561)</name>
    <dbReference type="NCBI Taxonomy" id="431947"/>
    <lineage>
        <taxon>Bacteria</taxon>
        <taxon>Pseudomonadati</taxon>
        <taxon>Bacteroidota</taxon>
        <taxon>Bacteroidia</taxon>
        <taxon>Bacteroidales</taxon>
        <taxon>Porphyromonadaceae</taxon>
        <taxon>Porphyromonas</taxon>
    </lineage>
</organism>
<comment type="catalytic activity">
    <reaction evidence="1">
        <text>tRNA(Arg) + L-arginine + ATP = L-arginyl-tRNA(Arg) + AMP + diphosphate</text>
        <dbReference type="Rhea" id="RHEA:20301"/>
        <dbReference type="Rhea" id="RHEA-COMP:9658"/>
        <dbReference type="Rhea" id="RHEA-COMP:9673"/>
        <dbReference type="ChEBI" id="CHEBI:30616"/>
        <dbReference type="ChEBI" id="CHEBI:32682"/>
        <dbReference type="ChEBI" id="CHEBI:33019"/>
        <dbReference type="ChEBI" id="CHEBI:78442"/>
        <dbReference type="ChEBI" id="CHEBI:78513"/>
        <dbReference type="ChEBI" id="CHEBI:456215"/>
        <dbReference type="EC" id="6.1.1.19"/>
    </reaction>
</comment>
<comment type="subunit">
    <text evidence="1">Monomer.</text>
</comment>
<comment type="subcellular location">
    <subcellularLocation>
        <location evidence="1">Cytoplasm</location>
    </subcellularLocation>
</comment>
<comment type="similarity">
    <text evidence="1">Belongs to the class-I aminoacyl-tRNA synthetase family.</text>
</comment>
<proteinExistence type="inferred from homology"/>
<dbReference type="EC" id="6.1.1.19" evidence="1"/>
<dbReference type="EMBL" id="AP009380">
    <property type="protein sequence ID" value="BAG32884.1"/>
    <property type="molecule type" value="Genomic_DNA"/>
</dbReference>
<dbReference type="RefSeq" id="WP_012457453.1">
    <property type="nucleotide sequence ID" value="NC_010729.1"/>
</dbReference>
<dbReference type="SMR" id="B2RHN9"/>
<dbReference type="GeneID" id="29255605"/>
<dbReference type="KEGG" id="pgn:PGN_0365"/>
<dbReference type="eggNOG" id="COG0018">
    <property type="taxonomic scope" value="Bacteria"/>
</dbReference>
<dbReference type="HOGENOM" id="CLU_006406_6_1_10"/>
<dbReference type="OrthoDB" id="9805987at2"/>
<dbReference type="BioCyc" id="PGIN431947:G1G2V-401-MONOMER"/>
<dbReference type="Proteomes" id="UP000008842">
    <property type="component" value="Chromosome"/>
</dbReference>
<dbReference type="GO" id="GO:0005737">
    <property type="term" value="C:cytoplasm"/>
    <property type="evidence" value="ECO:0007669"/>
    <property type="project" value="UniProtKB-SubCell"/>
</dbReference>
<dbReference type="GO" id="GO:0004814">
    <property type="term" value="F:arginine-tRNA ligase activity"/>
    <property type="evidence" value="ECO:0007669"/>
    <property type="project" value="UniProtKB-UniRule"/>
</dbReference>
<dbReference type="GO" id="GO:0005524">
    <property type="term" value="F:ATP binding"/>
    <property type="evidence" value="ECO:0007669"/>
    <property type="project" value="UniProtKB-UniRule"/>
</dbReference>
<dbReference type="GO" id="GO:0006420">
    <property type="term" value="P:arginyl-tRNA aminoacylation"/>
    <property type="evidence" value="ECO:0007669"/>
    <property type="project" value="UniProtKB-UniRule"/>
</dbReference>
<dbReference type="FunFam" id="3.40.50.620:FF:000125">
    <property type="entry name" value="Arginine--tRNA ligase"/>
    <property type="match status" value="1"/>
</dbReference>
<dbReference type="Gene3D" id="3.30.1360.70">
    <property type="entry name" value="Arginyl tRNA synthetase N-terminal domain"/>
    <property type="match status" value="1"/>
</dbReference>
<dbReference type="Gene3D" id="3.40.50.620">
    <property type="entry name" value="HUPs"/>
    <property type="match status" value="1"/>
</dbReference>
<dbReference type="Gene3D" id="1.10.730.10">
    <property type="entry name" value="Isoleucyl-tRNA Synthetase, Domain 1"/>
    <property type="match status" value="1"/>
</dbReference>
<dbReference type="HAMAP" id="MF_00123">
    <property type="entry name" value="Arg_tRNA_synth"/>
    <property type="match status" value="1"/>
</dbReference>
<dbReference type="InterPro" id="IPR001412">
    <property type="entry name" value="aa-tRNA-synth_I_CS"/>
</dbReference>
<dbReference type="InterPro" id="IPR001278">
    <property type="entry name" value="Arg-tRNA-ligase"/>
</dbReference>
<dbReference type="InterPro" id="IPR005148">
    <property type="entry name" value="Arg-tRNA-synth_N"/>
</dbReference>
<dbReference type="InterPro" id="IPR036695">
    <property type="entry name" value="Arg-tRNA-synth_N_sf"/>
</dbReference>
<dbReference type="InterPro" id="IPR035684">
    <property type="entry name" value="ArgRS_core"/>
</dbReference>
<dbReference type="InterPro" id="IPR008909">
    <property type="entry name" value="DALR_anticod-bd"/>
</dbReference>
<dbReference type="InterPro" id="IPR014729">
    <property type="entry name" value="Rossmann-like_a/b/a_fold"/>
</dbReference>
<dbReference type="InterPro" id="IPR009080">
    <property type="entry name" value="tRNAsynth_Ia_anticodon-bd"/>
</dbReference>
<dbReference type="NCBIfam" id="TIGR00456">
    <property type="entry name" value="argS"/>
    <property type="match status" value="1"/>
</dbReference>
<dbReference type="PANTHER" id="PTHR11956:SF5">
    <property type="entry name" value="ARGININE--TRNA LIGASE, CYTOPLASMIC"/>
    <property type="match status" value="1"/>
</dbReference>
<dbReference type="PANTHER" id="PTHR11956">
    <property type="entry name" value="ARGINYL-TRNA SYNTHETASE"/>
    <property type="match status" value="1"/>
</dbReference>
<dbReference type="Pfam" id="PF03485">
    <property type="entry name" value="Arg_tRNA_synt_N"/>
    <property type="match status" value="1"/>
</dbReference>
<dbReference type="Pfam" id="PF05746">
    <property type="entry name" value="DALR_1"/>
    <property type="match status" value="1"/>
</dbReference>
<dbReference type="Pfam" id="PF00750">
    <property type="entry name" value="tRNA-synt_1d"/>
    <property type="match status" value="1"/>
</dbReference>
<dbReference type="PRINTS" id="PR01038">
    <property type="entry name" value="TRNASYNTHARG"/>
</dbReference>
<dbReference type="SMART" id="SM01016">
    <property type="entry name" value="Arg_tRNA_synt_N"/>
    <property type="match status" value="1"/>
</dbReference>
<dbReference type="SMART" id="SM00836">
    <property type="entry name" value="DALR_1"/>
    <property type="match status" value="1"/>
</dbReference>
<dbReference type="SUPFAM" id="SSF47323">
    <property type="entry name" value="Anticodon-binding domain of a subclass of class I aminoacyl-tRNA synthetases"/>
    <property type="match status" value="1"/>
</dbReference>
<dbReference type="SUPFAM" id="SSF55190">
    <property type="entry name" value="Arginyl-tRNA synthetase (ArgRS), N-terminal 'additional' domain"/>
    <property type="match status" value="1"/>
</dbReference>
<dbReference type="SUPFAM" id="SSF52374">
    <property type="entry name" value="Nucleotidylyl transferase"/>
    <property type="match status" value="1"/>
</dbReference>
<dbReference type="PROSITE" id="PS00178">
    <property type="entry name" value="AA_TRNA_LIGASE_I"/>
    <property type="match status" value="1"/>
</dbReference>
<gene>
    <name evidence="1" type="primary">argS</name>
    <name type="ordered locus">PGN_0365</name>
</gene>
<sequence length="597" mass="67522">MSILQKLENSAAAAVKALYGTDPMEGQIQLQKTKREFKGHLTLVVFPFVKMSRKSPEATATEIGEWLLANESAVSAIEVVKGFLNLTIAPRVWLELLNEIRADINFGHKVATEDSPLVMVEYSSPNTNKPLHLGHVRNNLLGYSLSEIMKANGYRVVKTNIVNDRGIHICKSMLAWQKWGDGVTPEKAGKKGDHLIGDFYVLFDKHYKAELNSLMAEGKSKEEAEAASTLMAEAREMLRLWEAGDEKVVDLWRTMNQWVYDGFEATYKMMGVDFDKIYYESETYLVGKEEVLRGLEEGLFVKHSDGSVWADLTKDGLDEKLLLRADGTSVYMTQDIGTAKMRFNDYPINRMIYVVGNEQNYHFQVLSILLDRLGFEFGKGLVHFSYGMVELPEGKMKSREGTVVDADDLMDEMIRTAAEIAAEAGKAAEKDEEESREVARIVGLGSLKYFILKVDPRKNMTFNPKESIDFNGNTGSFVQYTYARIRSLMRRAEAAGYDIPSQLPTDLPLSEKEEALIQKVSEYAEVVSEAGRSYSPALIANYIYDLVKEYNQFYHDFSVLKEEDERIRAFRLALSEVVALTMRKGFALLGIEMPERM</sequence>
<keyword id="KW-0030">Aminoacyl-tRNA synthetase</keyword>
<keyword id="KW-0067">ATP-binding</keyword>
<keyword id="KW-0963">Cytoplasm</keyword>
<keyword id="KW-0436">Ligase</keyword>
<keyword id="KW-0547">Nucleotide-binding</keyword>
<keyword id="KW-0648">Protein biosynthesis</keyword>
<name>SYR_PORG3</name>
<protein>
    <recommendedName>
        <fullName evidence="1">Arginine--tRNA ligase</fullName>
        <ecNumber evidence="1">6.1.1.19</ecNumber>
    </recommendedName>
    <alternativeName>
        <fullName evidence="1">Arginyl-tRNA synthetase</fullName>
        <shortName evidence="1">ArgRS</shortName>
    </alternativeName>
</protein>
<evidence type="ECO:0000255" key="1">
    <source>
        <dbReference type="HAMAP-Rule" id="MF_00123"/>
    </source>
</evidence>